<protein>
    <recommendedName>
        <fullName evidence="1">Ribosome maturation factor RimP</fullName>
    </recommendedName>
</protein>
<accession>Q9CHG8</accession>
<gene>
    <name evidence="1" type="primary">rimP</name>
    <name type="synonym">yhhE</name>
    <name type="ordered locus">LL0763</name>
    <name type="ORF">L173151</name>
</gene>
<proteinExistence type="inferred from homology"/>
<comment type="function">
    <text evidence="1">Required for maturation of 30S ribosomal subunits.</text>
</comment>
<comment type="subcellular location">
    <subcellularLocation>
        <location evidence="1">Cytoplasm</location>
    </subcellularLocation>
</comment>
<comment type="similarity">
    <text evidence="1">Belongs to the RimP family.</text>
</comment>
<name>RIMP_LACLA</name>
<feature type="chain" id="PRO_0000181881" description="Ribosome maturation factor RimP">
    <location>
        <begin position="1"/>
        <end position="157"/>
    </location>
</feature>
<organism>
    <name type="scientific">Lactococcus lactis subsp. lactis (strain IL1403)</name>
    <name type="common">Streptococcus lactis</name>
    <dbReference type="NCBI Taxonomy" id="272623"/>
    <lineage>
        <taxon>Bacteria</taxon>
        <taxon>Bacillati</taxon>
        <taxon>Bacillota</taxon>
        <taxon>Bacilli</taxon>
        <taxon>Lactobacillales</taxon>
        <taxon>Streptococcaceae</taxon>
        <taxon>Lactococcus</taxon>
    </lineage>
</organism>
<dbReference type="EMBL" id="AE005176">
    <property type="protein sequence ID" value="AAK04861.1"/>
    <property type="molecule type" value="Genomic_DNA"/>
</dbReference>
<dbReference type="PIR" id="C86720">
    <property type="entry name" value="C86720"/>
</dbReference>
<dbReference type="RefSeq" id="NP_266919.1">
    <property type="nucleotide sequence ID" value="NC_002662.1"/>
</dbReference>
<dbReference type="RefSeq" id="WP_010905551.1">
    <property type="nucleotide sequence ID" value="NC_002662.1"/>
</dbReference>
<dbReference type="SMR" id="Q9CHG8"/>
<dbReference type="PaxDb" id="272623-L173151"/>
<dbReference type="EnsemblBacteria" id="AAK04861">
    <property type="protein sequence ID" value="AAK04861"/>
    <property type="gene ID" value="L173151"/>
</dbReference>
<dbReference type="GeneID" id="89632896"/>
<dbReference type="KEGG" id="lla:L173151"/>
<dbReference type="PATRIC" id="fig|272623.7.peg.818"/>
<dbReference type="eggNOG" id="COG0779">
    <property type="taxonomic scope" value="Bacteria"/>
</dbReference>
<dbReference type="HOGENOM" id="CLU_070525_2_0_9"/>
<dbReference type="OrthoDB" id="9805006at2"/>
<dbReference type="Proteomes" id="UP000002196">
    <property type="component" value="Chromosome"/>
</dbReference>
<dbReference type="GO" id="GO:0005829">
    <property type="term" value="C:cytosol"/>
    <property type="evidence" value="ECO:0007669"/>
    <property type="project" value="TreeGrafter"/>
</dbReference>
<dbReference type="GO" id="GO:0000028">
    <property type="term" value="P:ribosomal small subunit assembly"/>
    <property type="evidence" value="ECO:0007669"/>
    <property type="project" value="TreeGrafter"/>
</dbReference>
<dbReference type="GO" id="GO:0006412">
    <property type="term" value="P:translation"/>
    <property type="evidence" value="ECO:0007669"/>
    <property type="project" value="TreeGrafter"/>
</dbReference>
<dbReference type="CDD" id="cd01734">
    <property type="entry name" value="YlxS_C"/>
    <property type="match status" value="1"/>
</dbReference>
<dbReference type="Gene3D" id="2.30.30.180">
    <property type="entry name" value="Ribosome maturation factor RimP, C-terminal domain"/>
    <property type="match status" value="1"/>
</dbReference>
<dbReference type="Gene3D" id="3.30.300.70">
    <property type="entry name" value="RimP-like superfamily, N-terminal"/>
    <property type="match status" value="1"/>
</dbReference>
<dbReference type="HAMAP" id="MF_01077">
    <property type="entry name" value="RimP"/>
    <property type="match status" value="1"/>
</dbReference>
<dbReference type="InterPro" id="IPR003728">
    <property type="entry name" value="Ribosome_maturation_RimP"/>
</dbReference>
<dbReference type="InterPro" id="IPR028998">
    <property type="entry name" value="RimP_C"/>
</dbReference>
<dbReference type="InterPro" id="IPR036847">
    <property type="entry name" value="RimP_C_sf"/>
</dbReference>
<dbReference type="InterPro" id="IPR028989">
    <property type="entry name" value="RimP_N"/>
</dbReference>
<dbReference type="InterPro" id="IPR035956">
    <property type="entry name" value="RimP_N_sf"/>
</dbReference>
<dbReference type="NCBIfam" id="NF000928">
    <property type="entry name" value="PRK00092.1-2"/>
    <property type="match status" value="1"/>
</dbReference>
<dbReference type="PANTHER" id="PTHR33867">
    <property type="entry name" value="RIBOSOME MATURATION FACTOR RIMP"/>
    <property type="match status" value="1"/>
</dbReference>
<dbReference type="PANTHER" id="PTHR33867:SF1">
    <property type="entry name" value="RIBOSOME MATURATION FACTOR RIMP"/>
    <property type="match status" value="1"/>
</dbReference>
<dbReference type="Pfam" id="PF17384">
    <property type="entry name" value="DUF150_C"/>
    <property type="match status" value="1"/>
</dbReference>
<dbReference type="Pfam" id="PF02576">
    <property type="entry name" value="RimP_N"/>
    <property type="match status" value="1"/>
</dbReference>
<dbReference type="SUPFAM" id="SSF74942">
    <property type="entry name" value="YhbC-like, C-terminal domain"/>
    <property type="match status" value="1"/>
</dbReference>
<dbReference type="SUPFAM" id="SSF75420">
    <property type="entry name" value="YhbC-like, N-terminal domain"/>
    <property type="match status" value="1"/>
</dbReference>
<reference key="1">
    <citation type="journal article" date="2001" name="Genome Res.">
        <title>The complete genome sequence of the lactic acid bacterium Lactococcus lactis ssp. lactis IL1403.</title>
        <authorList>
            <person name="Bolotin A."/>
            <person name="Wincker P."/>
            <person name="Mauger S."/>
            <person name="Jaillon O."/>
            <person name="Malarme K."/>
            <person name="Weissenbach J."/>
            <person name="Ehrlich S.D."/>
            <person name="Sorokin A."/>
        </authorList>
    </citation>
    <scope>NUCLEOTIDE SEQUENCE [LARGE SCALE GENOMIC DNA]</scope>
    <source>
        <strain>IL1403</strain>
    </source>
</reference>
<keyword id="KW-0963">Cytoplasm</keyword>
<keyword id="KW-1185">Reference proteome</keyword>
<keyword id="KW-0690">Ribosome biogenesis</keyword>
<sequence length="157" mass="17546">MNDVVKIVEDFIRPHIPQPFELFAVEWEKFGGDMMLSILVDKEGGIEIDETAELSEIISPLLDTISPDPFPTEGYLLEVASPGAERPLRKAEHFAGAVGEYIFVKLYQKINNEKEITGDLVSFDGETLVVDVLDKTRHKNIEIPLSAVAKAQTMVKF</sequence>
<evidence type="ECO:0000255" key="1">
    <source>
        <dbReference type="HAMAP-Rule" id="MF_01077"/>
    </source>
</evidence>